<sequence length="523" mass="58106">MTNIHNHKILILDFGSQYTQLIARRVREIGVYCELWAWDVTEEQIREFAPTGIILSGSPESTTEENSPRAPEYVFNAGVPVLGVCYGMQTMAMQLGGLTETSDHREFGYASVSLENSTALFANLNDNLTASEPKLDVWMSHGDKVTRLPQNFQVTGTTPTCPIAAMSDESRRFYGVQFHPEVTHTKKGLELLTNFVVNICGCETKWTAENIIEDAVARIKEQVGDDEVILGLSGGVDSSVVALLLHRAIGKNLHCVFVDNGLLRLHEGDQVMEMFGDKFGLNITRVDAESRFLGELAGVSDPEAKRKIIGKVFVDVFDDESKKLTNVKWLAQGTIYPDVIESAASKTGKAHVIKSHHNVGGLPDYMKLGLVEPLRELFKDEVRKIGLALGLPAEMINRHPFPGPGLGVRVLGEVKKEYCDLLRRADAIFIEELRNSGWYEKTSQAFSVFLPVKSVGVMGDGRKYDWVISLRAVETIDFMTAHWAHLPYDLLGKVSNRIINEVNGISRVVYDISGKPPATIEWE</sequence>
<feature type="chain" id="PRO_1000120309" description="GMP synthase [glutamine-hydrolyzing]">
    <location>
        <begin position="1"/>
        <end position="523"/>
    </location>
</feature>
<feature type="domain" description="Glutamine amidotransferase type-1" evidence="1">
    <location>
        <begin position="8"/>
        <end position="205"/>
    </location>
</feature>
<feature type="domain" description="GMPS ATP-PPase" evidence="1">
    <location>
        <begin position="206"/>
        <end position="398"/>
    </location>
</feature>
<feature type="active site" description="Nucleophile" evidence="1">
    <location>
        <position position="85"/>
    </location>
</feature>
<feature type="active site" evidence="1">
    <location>
        <position position="179"/>
    </location>
</feature>
<feature type="active site" evidence="1">
    <location>
        <position position="181"/>
    </location>
</feature>
<feature type="binding site" evidence="1">
    <location>
        <begin position="233"/>
        <end position="239"/>
    </location>
    <ligand>
        <name>ATP</name>
        <dbReference type="ChEBI" id="CHEBI:30616"/>
    </ligand>
</feature>
<proteinExistence type="inferred from homology"/>
<keyword id="KW-0067">ATP-binding</keyword>
<keyword id="KW-0315">Glutamine amidotransferase</keyword>
<keyword id="KW-0332">GMP biosynthesis</keyword>
<keyword id="KW-0436">Ligase</keyword>
<keyword id="KW-0547">Nucleotide-binding</keyword>
<keyword id="KW-0658">Purine biosynthesis</keyword>
<reference key="1">
    <citation type="journal article" date="2007" name="Genome Biol.">
        <title>Characterization and modeling of the Haemophilus influenzae core and supragenomes based on the complete genomic sequences of Rd and 12 clinical nontypeable strains.</title>
        <authorList>
            <person name="Hogg J.S."/>
            <person name="Hu F.Z."/>
            <person name="Janto B."/>
            <person name="Boissy R."/>
            <person name="Hayes J."/>
            <person name="Keefe R."/>
            <person name="Post J.C."/>
            <person name="Ehrlich G.D."/>
        </authorList>
    </citation>
    <scope>NUCLEOTIDE SEQUENCE [LARGE SCALE GENOMIC DNA]</scope>
    <source>
        <strain>PittEE</strain>
    </source>
</reference>
<gene>
    <name evidence="1" type="primary">guaA</name>
    <name type="ordered locus">CGSHiEE_01965</name>
</gene>
<protein>
    <recommendedName>
        <fullName evidence="1">GMP synthase [glutamine-hydrolyzing]</fullName>
        <ecNumber evidence="1">6.3.5.2</ecNumber>
    </recommendedName>
    <alternativeName>
        <fullName evidence="1">GMP synthetase</fullName>
    </alternativeName>
    <alternativeName>
        <fullName evidence="1">Glutamine amidotransferase</fullName>
    </alternativeName>
</protein>
<comment type="function">
    <text evidence="1">Catalyzes the synthesis of GMP from XMP.</text>
</comment>
<comment type="catalytic activity">
    <reaction evidence="1">
        <text>XMP + L-glutamine + ATP + H2O = GMP + L-glutamate + AMP + diphosphate + 2 H(+)</text>
        <dbReference type="Rhea" id="RHEA:11680"/>
        <dbReference type="ChEBI" id="CHEBI:15377"/>
        <dbReference type="ChEBI" id="CHEBI:15378"/>
        <dbReference type="ChEBI" id="CHEBI:29985"/>
        <dbReference type="ChEBI" id="CHEBI:30616"/>
        <dbReference type="ChEBI" id="CHEBI:33019"/>
        <dbReference type="ChEBI" id="CHEBI:57464"/>
        <dbReference type="ChEBI" id="CHEBI:58115"/>
        <dbReference type="ChEBI" id="CHEBI:58359"/>
        <dbReference type="ChEBI" id="CHEBI:456215"/>
        <dbReference type="EC" id="6.3.5.2"/>
    </reaction>
</comment>
<comment type="pathway">
    <text evidence="1">Purine metabolism; GMP biosynthesis; GMP from XMP (L-Gln route): step 1/1.</text>
</comment>
<comment type="subunit">
    <text evidence="1">Homodimer.</text>
</comment>
<organism>
    <name type="scientific">Haemophilus influenzae (strain PittEE)</name>
    <dbReference type="NCBI Taxonomy" id="374930"/>
    <lineage>
        <taxon>Bacteria</taxon>
        <taxon>Pseudomonadati</taxon>
        <taxon>Pseudomonadota</taxon>
        <taxon>Gammaproteobacteria</taxon>
        <taxon>Pasteurellales</taxon>
        <taxon>Pasteurellaceae</taxon>
        <taxon>Haemophilus</taxon>
    </lineage>
</organism>
<evidence type="ECO:0000255" key="1">
    <source>
        <dbReference type="HAMAP-Rule" id="MF_00344"/>
    </source>
</evidence>
<name>GUAA_HAEIE</name>
<accession>A5UAR3</accession>
<dbReference type="EC" id="6.3.5.2" evidence="1"/>
<dbReference type="EMBL" id="CP000671">
    <property type="protein sequence ID" value="ABQ97864.1"/>
    <property type="molecule type" value="Genomic_DNA"/>
</dbReference>
<dbReference type="SMR" id="A5UAR3"/>
<dbReference type="MEROPS" id="C26.957"/>
<dbReference type="KEGG" id="hip:CGSHiEE_01965"/>
<dbReference type="HOGENOM" id="CLU_014340_0_5_6"/>
<dbReference type="UniPathway" id="UPA00189">
    <property type="reaction ID" value="UER00296"/>
</dbReference>
<dbReference type="GO" id="GO:0005829">
    <property type="term" value="C:cytosol"/>
    <property type="evidence" value="ECO:0007669"/>
    <property type="project" value="TreeGrafter"/>
</dbReference>
<dbReference type="GO" id="GO:0005524">
    <property type="term" value="F:ATP binding"/>
    <property type="evidence" value="ECO:0007669"/>
    <property type="project" value="UniProtKB-UniRule"/>
</dbReference>
<dbReference type="GO" id="GO:0003921">
    <property type="term" value="F:GMP synthase activity"/>
    <property type="evidence" value="ECO:0007669"/>
    <property type="project" value="InterPro"/>
</dbReference>
<dbReference type="CDD" id="cd01742">
    <property type="entry name" value="GATase1_GMP_Synthase"/>
    <property type="match status" value="1"/>
</dbReference>
<dbReference type="CDD" id="cd01997">
    <property type="entry name" value="GMP_synthase_C"/>
    <property type="match status" value="1"/>
</dbReference>
<dbReference type="FunFam" id="3.30.300.10:FF:000002">
    <property type="entry name" value="GMP synthase [glutamine-hydrolyzing]"/>
    <property type="match status" value="1"/>
</dbReference>
<dbReference type="FunFam" id="3.40.50.620:FF:000001">
    <property type="entry name" value="GMP synthase [glutamine-hydrolyzing]"/>
    <property type="match status" value="1"/>
</dbReference>
<dbReference type="FunFam" id="3.40.50.880:FF:000001">
    <property type="entry name" value="GMP synthase [glutamine-hydrolyzing]"/>
    <property type="match status" value="1"/>
</dbReference>
<dbReference type="Gene3D" id="3.30.300.10">
    <property type="match status" value="1"/>
</dbReference>
<dbReference type="Gene3D" id="3.40.50.880">
    <property type="match status" value="1"/>
</dbReference>
<dbReference type="Gene3D" id="3.40.50.620">
    <property type="entry name" value="HUPs"/>
    <property type="match status" value="1"/>
</dbReference>
<dbReference type="HAMAP" id="MF_00344">
    <property type="entry name" value="GMP_synthase"/>
    <property type="match status" value="1"/>
</dbReference>
<dbReference type="InterPro" id="IPR029062">
    <property type="entry name" value="Class_I_gatase-like"/>
</dbReference>
<dbReference type="InterPro" id="IPR017926">
    <property type="entry name" value="GATASE"/>
</dbReference>
<dbReference type="InterPro" id="IPR001674">
    <property type="entry name" value="GMP_synth_C"/>
</dbReference>
<dbReference type="InterPro" id="IPR004739">
    <property type="entry name" value="GMP_synth_GATase"/>
</dbReference>
<dbReference type="InterPro" id="IPR022955">
    <property type="entry name" value="GMP_synthase"/>
</dbReference>
<dbReference type="InterPro" id="IPR025777">
    <property type="entry name" value="GMPS_ATP_PPase_dom"/>
</dbReference>
<dbReference type="InterPro" id="IPR022310">
    <property type="entry name" value="NAD/GMP_synthase"/>
</dbReference>
<dbReference type="InterPro" id="IPR014729">
    <property type="entry name" value="Rossmann-like_a/b/a_fold"/>
</dbReference>
<dbReference type="NCBIfam" id="TIGR00884">
    <property type="entry name" value="guaA_Cterm"/>
    <property type="match status" value="1"/>
</dbReference>
<dbReference type="NCBIfam" id="TIGR00888">
    <property type="entry name" value="guaA_Nterm"/>
    <property type="match status" value="1"/>
</dbReference>
<dbReference type="NCBIfam" id="NF000848">
    <property type="entry name" value="PRK00074.1"/>
    <property type="match status" value="1"/>
</dbReference>
<dbReference type="PANTHER" id="PTHR11922:SF2">
    <property type="entry name" value="GMP SYNTHASE [GLUTAMINE-HYDROLYZING]"/>
    <property type="match status" value="1"/>
</dbReference>
<dbReference type="PANTHER" id="PTHR11922">
    <property type="entry name" value="GMP SYNTHASE-RELATED"/>
    <property type="match status" value="1"/>
</dbReference>
<dbReference type="Pfam" id="PF00117">
    <property type="entry name" value="GATase"/>
    <property type="match status" value="1"/>
</dbReference>
<dbReference type="Pfam" id="PF00958">
    <property type="entry name" value="GMP_synt_C"/>
    <property type="match status" value="1"/>
</dbReference>
<dbReference type="Pfam" id="PF02540">
    <property type="entry name" value="NAD_synthase"/>
    <property type="match status" value="1"/>
</dbReference>
<dbReference type="PRINTS" id="PR00099">
    <property type="entry name" value="CPSGATASE"/>
</dbReference>
<dbReference type="PRINTS" id="PR00096">
    <property type="entry name" value="GATASE"/>
</dbReference>
<dbReference type="SUPFAM" id="SSF52402">
    <property type="entry name" value="Adenine nucleotide alpha hydrolases-like"/>
    <property type="match status" value="1"/>
</dbReference>
<dbReference type="SUPFAM" id="SSF52317">
    <property type="entry name" value="Class I glutamine amidotransferase-like"/>
    <property type="match status" value="1"/>
</dbReference>
<dbReference type="SUPFAM" id="SSF54810">
    <property type="entry name" value="GMP synthetase C-terminal dimerisation domain"/>
    <property type="match status" value="1"/>
</dbReference>
<dbReference type="PROSITE" id="PS51273">
    <property type="entry name" value="GATASE_TYPE_1"/>
    <property type="match status" value="1"/>
</dbReference>
<dbReference type="PROSITE" id="PS51553">
    <property type="entry name" value="GMPS_ATP_PPASE"/>
    <property type="match status" value="1"/>
</dbReference>